<gene>
    <name evidence="1" type="primary">uvrB</name>
    <name type="ordered locus">plu1491</name>
</gene>
<feature type="chain" id="PRO_0000227340" description="UvrABC system protein B">
    <location>
        <begin position="1"/>
        <end position="669"/>
    </location>
</feature>
<feature type="domain" description="Helicase ATP-binding" evidence="1">
    <location>
        <begin position="26"/>
        <end position="414"/>
    </location>
</feature>
<feature type="domain" description="Helicase C-terminal" evidence="1">
    <location>
        <begin position="431"/>
        <end position="597"/>
    </location>
</feature>
<feature type="domain" description="UVR" evidence="1">
    <location>
        <begin position="629"/>
        <end position="664"/>
    </location>
</feature>
<feature type="short sequence motif" description="Beta-hairpin">
    <location>
        <begin position="92"/>
        <end position="115"/>
    </location>
</feature>
<feature type="binding site" evidence="1">
    <location>
        <begin position="39"/>
        <end position="46"/>
    </location>
    <ligand>
        <name>ATP</name>
        <dbReference type="ChEBI" id="CHEBI:30616"/>
    </ligand>
</feature>
<evidence type="ECO:0000255" key="1">
    <source>
        <dbReference type="HAMAP-Rule" id="MF_00204"/>
    </source>
</evidence>
<dbReference type="EMBL" id="BX571864">
    <property type="protein sequence ID" value="CAE13784.1"/>
    <property type="molecule type" value="Genomic_DNA"/>
</dbReference>
<dbReference type="RefSeq" id="WP_011145793.1">
    <property type="nucleotide sequence ID" value="NC_005126.1"/>
</dbReference>
<dbReference type="SMR" id="Q7N6Q1"/>
<dbReference type="STRING" id="243265.plu1491"/>
<dbReference type="GeneID" id="48847782"/>
<dbReference type="KEGG" id="plu:plu1491"/>
<dbReference type="eggNOG" id="COG0556">
    <property type="taxonomic scope" value="Bacteria"/>
</dbReference>
<dbReference type="HOGENOM" id="CLU_009621_2_1_6"/>
<dbReference type="OrthoDB" id="9806651at2"/>
<dbReference type="Proteomes" id="UP000002514">
    <property type="component" value="Chromosome"/>
</dbReference>
<dbReference type="GO" id="GO:0005737">
    <property type="term" value="C:cytoplasm"/>
    <property type="evidence" value="ECO:0007669"/>
    <property type="project" value="UniProtKB-SubCell"/>
</dbReference>
<dbReference type="GO" id="GO:0009380">
    <property type="term" value="C:excinuclease repair complex"/>
    <property type="evidence" value="ECO:0007669"/>
    <property type="project" value="InterPro"/>
</dbReference>
<dbReference type="GO" id="GO:0005524">
    <property type="term" value="F:ATP binding"/>
    <property type="evidence" value="ECO:0007669"/>
    <property type="project" value="UniProtKB-UniRule"/>
</dbReference>
<dbReference type="GO" id="GO:0016887">
    <property type="term" value="F:ATP hydrolysis activity"/>
    <property type="evidence" value="ECO:0007669"/>
    <property type="project" value="InterPro"/>
</dbReference>
<dbReference type="GO" id="GO:0003677">
    <property type="term" value="F:DNA binding"/>
    <property type="evidence" value="ECO:0007669"/>
    <property type="project" value="UniProtKB-UniRule"/>
</dbReference>
<dbReference type="GO" id="GO:0009381">
    <property type="term" value="F:excinuclease ABC activity"/>
    <property type="evidence" value="ECO:0007669"/>
    <property type="project" value="UniProtKB-UniRule"/>
</dbReference>
<dbReference type="GO" id="GO:0006289">
    <property type="term" value="P:nucleotide-excision repair"/>
    <property type="evidence" value="ECO:0007669"/>
    <property type="project" value="UniProtKB-UniRule"/>
</dbReference>
<dbReference type="GO" id="GO:0009432">
    <property type="term" value="P:SOS response"/>
    <property type="evidence" value="ECO:0007669"/>
    <property type="project" value="UniProtKB-UniRule"/>
</dbReference>
<dbReference type="CDD" id="cd17916">
    <property type="entry name" value="DEXHc_UvrB"/>
    <property type="match status" value="1"/>
</dbReference>
<dbReference type="CDD" id="cd18790">
    <property type="entry name" value="SF2_C_UvrB"/>
    <property type="match status" value="1"/>
</dbReference>
<dbReference type="FunFam" id="3.40.50.300:FF:000257">
    <property type="entry name" value="UvrABC system protein B"/>
    <property type="match status" value="1"/>
</dbReference>
<dbReference type="FunFam" id="3.40.50.300:FF:000401">
    <property type="entry name" value="UvrABC system protein B"/>
    <property type="match status" value="1"/>
</dbReference>
<dbReference type="FunFam" id="3.40.50.300:FF:000477">
    <property type="entry name" value="UvrABC system protein B"/>
    <property type="match status" value="1"/>
</dbReference>
<dbReference type="Gene3D" id="3.40.50.300">
    <property type="entry name" value="P-loop containing nucleotide triphosphate hydrolases"/>
    <property type="match status" value="3"/>
</dbReference>
<dbReference type="Gene3D" id="4.10.860.10">
    <property type="entry name" value="UVR domain"/>
    <property type="match status" value="1"/>
</dbReference>
<dbReference type="HAMAP" id="MF_00204">
    <property type="entry name" value="UvrB"/>
    <property type="match status" value="1"/>
</dbReference>
<dbReference type="InterPro" id="IPR006935">
    <property type="entry name" value="Helicase/UvrB_N"/>
</dbReference>
<dbReference type="InterPro" id="IPR014001">
    <property type="entry name" value="Helicase_ATP-bd"/>
</dbReference>
<dbReference type="InterPro" id="IPR001650">
    <property type="entry name" value="Helicase_C-like"/>
</dbReference>
<dbReference type="InterPro" id="IPR027417">
    <property type="entry name" value="P-loop_NTPase"/>
</dbReference>
<dbReference type="InterPro" id="IPR001943">
    <property type="entry name" value="UVR_dom"/>
</dbReference>
<dbReference type="InterPro" id="IPR036876">
    <property type="entry name" value="UVR_dom_sf"/>
</dbReference>
<dbReference type="InterPro" id="IPR004807">
    <property type="entry name" value="UvrB"/>
</dbReference>
<dbReference type="InterPro" id="IPR041471">
    <property type="entry name" value="UvrB_inter"/>
</dbReference>
<dbReference type="InterPro" id="IPR024759">
    <property type="entry name" value="UvrB_YAD/RRR_dom"/>
</dbReference>
<dbReference type="NCBIfam" id="NF003673">
    <property type="entry name" value="PRK05298.1"/>
    <property type="match status" value="1"/>
</dbReference>
<dbReference type="NCBIfam" id="TIGR00631">
    <property type="entry name" value="uvrb"/>
    <property type="match status" value="1"/>
</dbReference>
<dbReference type="PANTHER" id="PTHR24029">
    <property type="entry name" value="UVRABC SYSTEM PROTEIN B"/>
    <property type="match status" value="1"/>
</dbReference>
<dbReference type="PANTHER" id="PTHR24029:SF0">
    <property type="entry name" value="UVRABC SYSTEM PROTEIN B"/>
    <property type="match status" value="1"/>
</dbReference>
<dbReference type="Pfam" id="PF00271">
    <property type="entry name" value="Helicase_C"/>
    <property type="match status" value="1"/>
</dbReference>
<dbReference type="Pfam" id="PF04851">
    <property type="entry name" value="ResIII"/>
    <property type="match status" value="1"/>
</dbReference>
<dbReference type="Pfam" id="PF02151">
    <property type="entry name" value="UVR"/>
    <property type="match status" value="1"/>
</dbReference>
<dbReference type="Pfam" id="PF12344">
    <property type="entry name" value="UvrB"/>
    <property type="match status" value="1"/>
</dbReference>
<dbReference type="Pfam" id="PF17757">
    <property type="entry name" value="UvrB_inter"/>
    <property type="match status" value="1"/>
</dbReference>
<dbReference type="SMART" id="SM00487">
    <property type="entry name" value="DEXDc"/>
    <property type="match status" value="1"/>
</dbReference>
<dbReference type="SMART" id="SM00490">
    <property type="entry name" value="HELICc"/>
    <property type="match status" value="1"/>
</dbReference>
<dbReference type="SUPFAM" id="SSF46600">
    <property type="entry name" value="C-terminal UvrC-binding domain of UvrB"/>
    <property type="match status" value="1"/>
</dbReference>
<dbReference type="SUPFAM" id="SSF52540">
    <property type="entry name" value="P-loop containing nucleoside triphosphate hydrolases"/>
    <property type="match status" value="2"/>
</dbReference>
<dbReference type="PROSITE" id="PS51192">
    <property type="entry name" value="HELICASE_ATP_BIND_1"/>
    <property type="match status" value="1"/>
</dbReference>
<dbReference type="PROSITE" id="PS51194">
    <property type="entry name" value="HELICASE_CTER"/>
    <property type="match status" value="1"/>
</dbReference>
<dbReference type="PROSITE" id="PS50151">
    <property type="entry name" value="UVR"/>
    <property type="match status" value="1"/>
</dbReference>
<accession>Q7N6Q1</accession>
<keyword id="KW-0067">ATP-binding</keyword>
<keyword id="KW-0963">Cytoplasm</keyword>
<keyword id="KW-0227">DNA damage</keyword>
<keyword id="KW-0228">DNA excision</keyword>
<keyword id="KW-0234">DNA repair</keyword>
<keyword id="KW-0267">Excision nuclease</keyword>
<keyword id="KW-0547">Nucleotide-binding</keyword>
<keyword id="KW-1185">Reference proteome</keyword>
<keyword id="KW-0742">SOS response</keyword>
<proteinExistence type="inferred from homology"/>
<organism>
    <name type="scientific">Photorhabdus laumondii subsp. laumondii (strain DSM 15139 / CIP 105565 / TT01)</name>
    <name type="common">Photorhabdus luminescens subsp. laumondii</name>
    <dbReference type="NCBI Taxonomy" id="243265"/>
    <lineage>
        <taxon>Bacteria</taxon>
        <taxon>Pseudomonadati</taxon>
        <taxon>Pseudomonadota</taxon>
        <taxon>Gammaproteobacteria</taxon>
        <taxon>Enterobacterales</taxon>
        <taxon>Morganellaceae</taxon>
        <taxon>Photorhabdus</taxon>
    </lineage>
</organism>
<sequence>MSKVFKLHSDFQPGGDQPEAIRQLQEGLEDGLAHQTLLGVTGSGKTFTVANVIANLNRPTMVLAPNKTLAAQLYSEMKDFFPENSVEYFVSYYDYYQPEAYVPSSDTFIEKDASVNEHIEQMRLSATKALLERRDVIVVASVSAIYGLGDPDSYLKMMLHLTNGMMIDQRSILRRLAELQYTRNDQAFQRGTFRVRGEVIDIFPAESDEHALRVELFDDEVERLSLFDPLTGQVQYHVPRYTVYPKTHYVTPRERIIQAMEAIKIELEQRRKVLLANGKLLEEQRITQRTQFDLEMMNELGYCSGIENYSRYLSGRTEGEPPPTLFDYLPADGLLVVDESHVTIPQIGGMYRGDRSRKETLVEYGFRMPSALDNRPLRFEEFEALAPQTIYISATPGKYELEKSSGDVVEQVVRPTGLLDPEVEVRPVATQVDDLLSEIRIRAVKNERVLVTTLTKRMAEDLTEYLEEHGERVRYLHSDIDTVERVEIIRDLRLGEFDVLVGINLLREGLDMPEVSLVAILDADKEGFLRSERSLIQTIGRAARNLHGKAILYGDKITDSMAKAIGETERRRAKQQIFNEKHGIVPKGLNKKINDILQIGQPAGGKRKGRGKAVATAETFSNLSAKELESKIRELEAKMYQHAQDLEFEQAASVRDQVQALREQFIANF</sequence>
<protein>
    <recommendedName>
        <fullName evidence="1">UvrABC system protein B</fullName>
        <shortName evidence="1">Protein UvrB</shortName>
    </recommendedName>
    <alternativeName>
        <fullName evidence="1">Excinuclease ABC subunit B</fullName>
    </alternativeName>
</protein>
<name>UVRB_PHOLL</name>
<reference key="1">
    <citation type="journal article" date="2003" name="Nat. Biotechnol.">
        <title>The genome sequence of the entomopathogenic bacterium Photorhabdus luminescens.</title>
        <authorList>
            <person name="Duchaud E."/>
            <person name="Rusniok C."/>
            <person name="Frangeul L."/>
            <person name="Buchrieser C."/>
            <person name="Givaudan A."/>
            <person name="Taourit S."/>
            <person name="Bocs S."/>
            <person name="Boursaux-Eude C."/>
            <person name="Chandler M."/>
            <person name="Charles J.-F."/>
            <person name="Dassa E."/>
            <person name="Derose R."/>
            <person name="Derzelle S."/>
            <person name="Freyssinet G."/>
            <person name="Gaudriault S."/>
            <person name="Medigue C."/>
            <person name="Lanois A."/>
            <person name="Powell K."/>
            <person name="Siguier P."/>
            <person name="Vincent R."/>
            <person name="Wingate V."/>
            <person name="Zouine M."/>
            <person name="Glaser P."/>
            <person name="Boemare N."/>
            <person name="Danchin A."/>
            <person name="Kunst F."/>
        </authorList>
    </citation>
    <scope>NUCLEOTIDE SEQUENCE [LARGE SCALE GENOMIC DNA]</scope>
    <source>
        <strain>DSM 15139 / CIP 105565 / TT01</strain>
    </source>
</reference>
<comment type="function">
    <text evidence="1">The UvrABC repair system catalyzes the recognition and processing of DNA lesions. A damage recognition complex composed of 2 UvrA and 2 UvrB subunits scans DNA for abnormalities. Upon binding of the UvrA(2)B(2) complex to a putative damaged site, the DNA wraps around one UvrB monomer. DNA wrap is dependent on ATP binding by UvrB and probably causes local melting of the DNA helix, facilitating insertion of UvrB beta-hairpin between the DNA strands. Then UvrB probes one DNA strand for the presence of a lesion. If a lesion is found the UvrA subunits dissociate and the UvrB-DNA preincision complex is formed. This complex is subsequently bound by UvrC and the second UvrB is released. If no lesion is found, the DNA wraps around the other UvrB subunit that will check the other stand for damage.</text>
</comment>
<comment type="subunit">
    <text evidence="1">Forms a heterotetramer with UvrA during the search for lesions. Interacts with UvrC in an incision complex.</text>
</comment>
<comment type="subcellular location">
    <subcellularLocation>
        <location evidence="1">Cytoplasm</location>
    </subcellularLocation>
</comment>
<comment type="domain">
    <text evidence="1">The beta-hairpin motif is involved in DNA binding.</text>
</comment>
<comment type="similarity">
    <text evidence="1">Belongs to the UvrB family.</text>
</comment>